<proteinExistence type="inferred from homology"/>
<evidence type="ECO:0000255" key="1">
    <source>
        <dbReference type="HAMAP-Rule" id="MF_00031"/>
    </source>
</evidence>
<accession>Q8Y6Z7</accession>
<dbReference type="EMBL" id="AL591979">
    <property type="protein sequence ID" value="CAC99611.1"/>
    <property type="molecule type" value="Genomic_DNA"/>
</dbReference>
<dbReference type="PIR" id="AE1266">
    <property type="entry name" value="AE1266"/>
</dbReference>
<dbReference type="RefSeq" id="NP_465058.1">
    <property type="nucleotide sequence ID" value="NC_003210.1"/>
</dbReference>
<dbReference type="RefSeq" id="WP_003732588.1">
    <property type="nucleotide sequence ID" value="NZ_CP149495.1"/>
</dbReference>
<dbReference type="SMR" id="Q8Y6Z7"/>
<dbReference type="STRING" id="169963.gene:17594190"/>
<dbReference type="PaxDb" id="169963-lmo1533"/>
<dbReference type="EnsemblBacteria" id="CAC99611">
    <property type="protein sequence ID" value="CAC99611"/>
    <property type="gene ID" value="CAC99611"/>
</dbReference>
<dbReference type="GeneID" id="987805"/>
<dbReference type="KEGG" id="lmo:lmo1533"/>
<dbReference type="PATRIC" id="fig|169963.11.peg.1574"/>
<dbReference type="eggNOG" id="COG0632">
    <property type="taxonomic scope" value="Bacteria"/>
</dbReference>
<dbReference type="HOGENOM" id="CLU_087936_1_0_9"/>
<dbReference type="OrthoDB" id="5293449at2"/>
<dbReference type="PhylomeDB" id="Q8Y6Z7"/>
<dbReference type="BioCyc" id="LMON169963:LMO1533-MONOMER"/>
<dbReference type="Proteomes" id="UP000000817">
    <property type="component" value="Chromosome"/>
</dbReference>
<dbReference type="GO" id="GO:0005737">
    <property type="term" value="C:cytoplasm"/>
    <property type="evidence" value="ECO:0007669"/>
    <property type="project" value="UniProtKB-SubCell"/>
</dbReference>
<dbReference type="GO" id="GO:0009379">
    <property type="term" value="C:Holliday junction helicase complex"/>
    <property type="evidence" value="ECO:0007669"/>
    <property type="project" value="InterPro"/>
</dbReference>
<dbReference type="GO" id="GO:0048476">
    <property type="term" value="C:Holliday junction resolvase complex"/>
    <property type="evidence" value="ECO:0007669"/>
    <property type="project" value="UniProtKB-UniRule"/>
</dbReference>
<dbReference type="GO" id="GO:0005524">
    <property type="term" value="F:ATP binding"/>
    <property type="evidence" value="ECO:0007669"/>
    <property type="project" value="InterPro"/>
</dbReference>
<dbReference type="GO" id="GO:0000400">
    <property type="term" value="F:four-way junction DNA binding"/>
    <property type="evidence" value="ECO:0007669"/>
    <property type="project" value="UniProtKB-UniRule"/>
</dbReference>
<dbReference type="GO" id="GO:0009378">
    <property type="term" value="F:four-way junction helicase activity"/>
    <property type="evidence" value="ECO:0000318"/>
    <property type="project" value="GO_Central"/>
</dbReference>
<dbReference type="GO" id="GO:0006310">
    <property type="term" value="P:DNA recombination"/>
    <property type="evidence" value="ECO:0007669"/>
    <property type="project" value="UniProtKB-UniRule"/>
</dbReference>
<dbReference type="GO" id="GO:0006281">
    <property type="term" value="P:DNA repair"/>
    <property type="evidence" value="ECO:0007669"/>
    <property type="project" value="UniProtKB-UniRule"/>
</dbReference>
<dbReference type="GO" id="GO:0009432">
    <property type="term" value="P:SOS response"/>
    <property type="evidence" value="ECO:0000318"/>
    <property type="project" value="GO_Central"/>
</dbReference>
<dbReference type="CDD" id="cd14332">
    <property type="entry name" value="UBA_RuvA_C"/>
    <property type="match status" value="1"/>
</dbReference>
<dbReference type="Gene3D" id="1.10.150.20">
    <property type="entry name" value="5' to 3' exonuclease, C-terminal subdomain"/>
    <property type="match status" value="1"/>
</dbReference>
<dbReference type="Gene3D" id="1.10.8.10">
    <property type="entry name" value="DNA helicase RuvA subunit, C-terminal domain"/>
    <property type="match status" value="1"/>
</dbReference>
<dbReference type="Gene3D" id="2.40.50.140">
    <property type="entry name" value="Nucleic acid-binding proteins"/>
    <property type="match status" value="1"/>
</dbReference>
<dbReference type="HAMAP" id="MF_00031">
    <property type="entry name" value="DNA_HJ_migration_RuvA"/>
    <property type="match status" value="1"/>
</dbReference>
<dbReference type="InterPro" id="IPR013849">
    <property type="entry name" value="DNA_helicase_Holl-junc_RuvA_I"/>
</dbReference>
<dbReference type="InterPro" id="IPR003583">
    <property type="entry name" value="Hlx-hairpin-Hlx_DNA-bd_motif"/>
</dbReference>
<dbReference type="InterPro" id="IPR012340">
    <property type="entry name" value="NA-bd_OB-fold"/>
</dbReference>
<dbReference type="InterPro" id="IPR000085">
    <property type="entry name" value="RuvA"/>
</dbReference>
<dbReference type="InterPro" id="IPR010994">
    <property type="entry name" value="RuvA_2-like"/>
</dbReference>
<dbReference type="InterPro" id="IPR011114">
    <property type="entry name" value="RuvA_C"/>
</dbReference>
<dbReference type="InterPro" id="IPR036267">
    <property type="entry name" value="RuvA_C_sf"/>
</dbReference>
<dbReference type="NCBIfam" id="TIGR00084">
    <property type="entry name" value="ruvA"/>
    <property type="match status" value="1"/>
</dbReference>
<dbReference type="Pfam" id="PF14520">
    <property type="entry name" value="HHH_5"/>
    <property type="match status" value="1"/>
</dbReference>
<dbReference type="Pfam" id="PF07499">
    <property type="entry name" value="RuvA_C"/>
    <property type="match status" value="1"/>
</dbReference>
<dbReference type="Pfam" id="PF01330">
    <property type="entry name" value="RuvA_N"/>
    <property type="match status" value="1"/>
</dbReference>
<dbReference type="SMART" id="SM00278">
    <property type="entry name" value="HhH1"/>
    <property type="match status" value="2"/>
</dbReference>
<dbReference type="SUPFAM" id="SSF46929">
    <property type="entry name" value="DNA helicase RuvA subunit, C-terminal domain"/>
    <property type="match status" value="1"/>
</dbReference>
<dbReference type="SUPFAM" id="SSF50249">
    <property type="entry name" value="Nucleic acid-binding proteins"/>
    <property type="match status" value="1"/>
</dbReference>
<dbReference type="SUPFAM" id="SSF47781">
    <property type="entry name" value="RuvA domain 2-like"/>
    <property type="match status" value="1"/>
</dbReference>
<name>RUVA_LISMO</name>
<sequence>MYDYIKGTVTTITPEYIVVEAGQIGYQIITGNPFSFQRLEGTEAQVFLYQHVREDNISLFGFQTTEERYLFKKLLSVSGIGPKSALAIIASGDVVPLISAIESEDDVYLTKFPSVGKKTARQIILDLKGKLADVVASEIVYVAPENDMVAGLSPQLEEAVLALEALGYSTRELKKVIPKLAKEADLTSDAYIKLALQLMTK</sequence>
<protein>
    <recommendedName>
        <fullName evidence="1">Holliday junction branch migration complex subunit RuvA</fullName>
    </recommendedName>
</protein>
<organism>
    <name type="scientific">Listeria monocytogenes serovar 1/2a (strain ATCC BAA-679 / EGD-e)</name>
    <dbReference type="NCBI Taxonomy" id="169963"/>
    <lineage>
        <taxon>Bacteria</taxon>
        <taxon>Bacillati</taxon>
        <taxon>Bacillota</taxon>
        <taxon>Bacilli</taxon>
        <taxon>Bacillales</taxon>
        <taxon>Listeriaceae</taxon>
        <taxon>Listeria</taxon>
    </lineage>
</organism>
<reference key="1">
    <citation type="journal article" date="2001" name="Science">
        <title>Comparative genomics of Listeria species.</title>
        <authorList>
            <person name="Glaser P."/>
            <person name="Frangeul L."/>
            <person name="Buchrieser C."/>
            <person name="Rusniok C."/>
            <person name="Amend A."/>
            <person name="Baquero F."/>
            <person name="Berche P."/>
            <person name="Bloecker H."/>
            <person name="Brandt P."/>
            <person name="Chakraborty T."/>
            <person name="Charbit A."/>
            <person name="Chetouani F."/>
            <person name="Couve E."/>
            <person name="de Daruvar A."/>
            <person name="Dehoux P."/>
            <person name="Domann E."/>
            <person name="Dominguez-Bernal G."/>
            <person name="Duchaud E."/>
            <person name="Durant L."/>
            <person name="Dussurget O."/>
            <person name="Entian K.-D."/>
            <person name="Fsihi H."/>
            <person name="Garcia-del Portillo F."/>
            <person name="Garrido P."/>
            <person name="Gautier L."/>
            <person name="Goebel W."/>
            <person name="Gomez-Lopez N."/>
            <person name="Hain T."/>
            <person name="Hauf J."/>
            <person name="Jackson D."/>
            <person name="Jones L.-M."/>
            <person name="Kaerst U."/>
            <person name="Kreft J."/>
            <person name="Kuhn M."/>
            <person name="Kunst F."/>
            <person name="Kurapkat G."/>
            <person name="Madueno E."/>
            <person name="Maitournam A."/>
            <person name="Mata Vicente J."/>
            <person name="Ng E."/>
            <person name="Nedjari H."/>
            <person name="Nordsiek G."/>
            <person name="Novella S."/>
            <person name="de Pablos B."/>
            <person name="Perez-Diaz J.-C."/>
            <person name="Purcell R."/>
            <person name="Remmel B."/>
            <person name="Rose M."/>
            <person name="Schlueter T."/>
            <person name="Simoes N."/>
            <person name="Tierrez A."/>
            <person name="Vazquez-Boland J.-A."/>
            <person name="Voss H."/>
            <person name="Wehland J."/>
            <person name="Cossart P."/>
        </authorList>
    </citation>
    <scope>NUCLEOTIDE SEQUENCE [LARGE SCALE GENOMIC DNA]</scope>
    <source>
        <strain>ATCC BAA-679 / EGD-e</strain>
    </source>
</reference>
<keyword id="KW-0963">Cytoplasm</keyword>
<keyword id="KW-0227">DNA damage</keyword>
<keyword id="KW-0233">DNA recombination</keyword>
<keyword id="KW-0234">DNA repair</keyword>
<keyword id="KW-0238">DNA-binding</keyword>
<keyword id="KW-1185">Reference proteome</keyword>
<gene>
    <name evidence="1" type="primary">ruvA</name>
    <name type="ordered locus">lmo1533</name>
</gene>
<comment type="function">
    <text evidence="1">The RuvA-RuvB-RuvC complex processes Holliday junction (HJ) DNA during genetic recombination and DNA repair, while the RuvA-RuvB complex plays an important role in the rescue of blocked DNA replication forks via replication fork reversal (RFR). RuvA specifically binds to HJ cruciform DNA, conferring on it an open structure. The RuvB hexamer acts as an ATP-dependent pump, pulling dsDNA into and through the RuvAB complex. HJ branch migration allows RuvC to scan DNA until it finds its consensus sequence, where it cleaves and resolves the cruciform DNA.</text>
</comment>
<comment type="subunit">
    <text evidence="1">Homotetramer. Forms an RuvA(8)-RuvB(12)-Holliday junction (HJ) complex. HJ DNA is sandwiched between 2 RuvA tetramers; dsDNA enters through RuvA and exits via RuvB. An RuvB hexamer assembles on each DNA strand where it exits the tetramer. Each RuvB hexamer is contacted by two RuvA subunits (via domain III) on 2 adjacent RuvB subunits; this complex drives branch migration. In the full resolvosome a probable DNA-RuvA(4)-RuvB(12)-RuvC(2) complex forms which resolves the HJ.</text>
</comment>
<comment type="subcellular location">
    <subcellularLocation>
        <location evidence="1">Cytoplasm</location>
    </subcellularLocation>
</comment>
<comment type="domain">
    <text evidence="1">Has three domains with a flexible linker between the domains II and III and assumes an 'L' shape. Domain III is highly mobile and contacts RuvB.</text>
</comment>
<comment type="similarity">
    <text evidence="1">Belongs to the RuvA family.</text>
</comment>
<feature type="chain" id="PRO_0000094646" description="Holliday junction branch migration complex subunit RuvA">
    <location>
        <begin position="1"/>
        <end position="201"/>
    </location>
</feature>
<feature type="region of interest" description="Domain I" evidence="1">
    <location>
        <begin position="1"/>
        <end position="63"/>
    </location>
</feature>
<feature type="region of interest" description="Domain II" evidence="1">
    <location>
        <begin position="64"/>
        <end position="142"/>
    </location>
</feature>
<feature type="region of interest" description="Flexible linker" evidence="1">
    <location>
        <begin position="143"/>
        <end position="153"/>
    </location>
</feature>
<feature type="region of interest" description="Domain III" evidence="1">
    <location>
        <begin position="153"/>
        <end position="201"/>
    </location>
</feature>